<accession>Q52374</accession>
<accession>Q60234</accession>
<accession>Q79CS0</accession>
<keyword id="KW-0997">Cell inner membrane</keyword>
<keyword id="KW-1003">Cell membrane</keyword>
<keyword id="KW-0472">Membrane</keyword>
<keyword id="KW-0843">Virulence</keyword>
<dbReference type="EMBL" id="U07346">
    <property type="protein sequence ID" value="AAA81945.1"/>
    <property type="molecule type" value="Genomic_DNA"/>
</dbReference>
<dbReference type="EMBL" id="U25812">
    <property type="protein sequence ID" value="AAB05073.1"/>
    <property type="molecule type" value="Genomic_DNA"/>
</dbReference>
<dbReference type="GO" id="GO:0005886">
    <property type="term" value="C:plasma membrane"/>
    <property type="evidence" value="ECO:0007669"/>
    <property type="project" value="UniProtKB-SubCell"/>
</dbReference>
<sequence length="238" mass="26034">MSALRLRKVDALLAQATRALGAGRRLGFSSRGQHAELSLLPLLEDARIPADGVWLNTAVGPLLLSDAEALLSLLGEVPFTLGGEHQGWYWQLFNQRLSPVVADLLAPVAPFSDTPTELAIGCRVHVRLGSERLDTRLHAAPATLLRLLGSADWQVLNRNLDESWSVSTPLIVGELSLTREQIASLRPGDVVLPARCRFDSAGQGSVTLAGRQWAARTDQQAQHLFLQLSHEEHSHHEY</sequence>
<protein>
    <recommendedName>
        <fullName>Type III secretion protein hrcQa</fullName>
    </recommendedName>
</protein>
<evidence type="ECO:0000250" key="1"/>
<evidence type="ECO:0000269" key="2">
    <source>
    </source>
</evidence>
<reference key="1">
    <citation type="journal article" date="1994" name="Mol. Plant Microbe Interact.">
        <title>Characterization of the hrpJ and hrpU operons of Pseudomonas syringae pv. syringae Pss61: similarity with components of enteric bacteria involved in flagellar biogenesis and demonstration of their role in HarpinPss secretion.</title>
        <authorList>
            <person name="Lidell M.C."/>
            <person name="Hutcheson S.W."/>
        </authorList>
    </citation>
    <scope>NUCLEOTIDE SEQUENCE [GENOMIC DNA]</scope>
    <source>
        <strain>Pss61</strain>
    </source>
</reference>
<reference key="2">
    <citation type="journal article" date="1995" name="Mol. Plant Microbe Interact.">
        <title>The complete hrp gene cluster of Pseudomonas syringae pv. syringae 61 includes two blocks of genes required for harpinPss secretion that are arranged colinearly with Yersinia ysc homologs.</title>
        <authorList>
            <person name="Huang H.-C."/>
            <person name="Lin R.-H."/>
            <person name="Chang C.-J."/>
            <person name="Collmer A."/>
            <person name="Deng W.-L."/>
        </authorList>
    </citation>
    <scope>NUCLEOTIDE SEQUENCE [GENOMIC DNA] OF 179-238</scope>
    <source>
        <strain>Pss61</strain>
    </source>
</reference>
<reference key="3">
    <citation type="journal article" date="1997" name="J. Bacteriol.">
        <title>Altered localization of HrpZ in Pseudomonas syringae pv. syringae hrp mutants suggests that different components of the type III secretion pathway control protein translocation across the inner and outer membranes of Gram-negative bacteria.</title>
        <authorList>
            <person name="Charkowski A.O."/>
            <person name="Huang H.-C."/>
            <person name="Collmer A."/>
        </authorList>
    </citation>
    <scope>FUNCTION</scope>
    <source>
        <strain>Pss61</strain>
    </source>
</reference>
<comment type="function">
    <text evidence="1 2">Component of the type III secretion system, which is required for effector protein delivery, parasitism, and pathogenicity. Probably participates in the formation of a C-ring-like assembly along with hrcQb (By similarity).</text>
</comment>
<comment type="subunit">
    <text evidence="1">Interacts with hrcQb.</text>
</comment>
<comment type="subcellular location">
    <subcellularLocation>
        <location evidence="1">Cell inner membrane</location>
        <topology evidence="1">Peripheral membrane protein</topology>
    </subcellularLocation>
</comment>
<comment type="domain">
    <text evidence="1">The HrcQa-C domain interacts with the hrcQb C-terminal domain.</text>
</comment>
<name>HRCQA_PSESY</name>
<gene>
    <name type="primary">hrcQa</name>
    <name type="synonym">hrpU2</name>
</gene>
<organism>
    <name type="scientific">Pseudomonas syringae pv. syringae</name>
    <dbReference type="NCBI Taxonomy" id="321"/>
    <lineage>
        <taxon>Bacteria</taxon>
        <taxon>Pseudomonadati</taxon>
        <taxon>Pseudomonadota</taxon>
        <taxon>Gammaproteobacteria</taxon>
        <taxon>Pseudomonadales</taxon>
        <taxon>Pseudomonadaceae</taxon>
        <taxon>Pseudomonas</taxon>
        <taxon>Pseudomonas syringae</taxon>
    </lineage>
</organism>
<proteinExistence type="inferred from homology"/>
<feature type="chain" id="PRO_0000084063" description="Type III secretion protein hrcQa">
    <location>
        <begin position="1"/>
        <end position="238"/>
    </location>
</feature>
<feature type="region of interest" description="HrcQa-C">
    <location>
        <begin position="66"/>
        <end position="238"/>
    </location>
</feature>